<sequence>MEKKTFYLTTPIYYPSDKLHIGHAYTTVAGDAMARYKRLRGYDVMYLTGTDEHGQKIQRKAQEKGVTPQQYVDDIVAGIQELWRKLDISYDDFIRTTQERHKKIVEKIFARLVEQGDIYLGEYEGWYCTPCESFYTERQLVDGNCPDCGRPVEKVKEESYFFRMSKYVDRLLQYYEENPDFIQPESRKNEMINNFIKPGLEDLAVSRTTFDWGIKVPGDPKHVIYVWIDALANYITALGYGTDNDEKFRKYWPADVHLVGKEIVRFHTIYWPIMLMALGLPLPKKVFGHGWLLMKDGKMSKSKGNVVDPVMIIDRYGLDALRYYLLREVPFGSDGVFTPEGFIERINYDLANDLGNLLHRTVAMIEKYFGGAIPPYRGPKTPFDRDLSETAREVVRQYEEAMERMEFSVALSAVWQLIGRTNKYIDETQPWVLAKEESKREELASVMAHLAESLRYTAVLLQPFLTRTPERIFTQLGISDRSLKEWDSLYDFGLIPEGTNVQKGEPLFPRLDIGVEVEYIKAHMQGGKPAEAAKEEKQAARAEEISIDDFAKVDLRVAEVVQPERMKNADKLLKLQLDLGGEKRQVISGIAEFYKPEELIGKKVICVANLKPAKLRGEWSEGMILAGGSGGGFSLATVDQHVPNGTKIK</sequence>
<accession>P23920</accession>
<dbReference type="EC" id="6.1.1.10"/>
<dbReference type="EMBL" id="X57925">
    <property type="protein sequence ID" value="CAA40999.1"/>
    <property type="molecule type" value="Genomic_DNA"/>
</dbReference>
<dbReference type="PIR" id="S16682">
    <property type="entry name" value="S16682"/>
</dbReference>
<dbReference type="SMR" id="P23920"/>
<dbReference type="ChEMBL" id="CHEMBL1641342"/>
<dbReference type="GO" id="GO:0005737">
    <property type="term" value="C:cytoplasm"/>
    <property type="evidence" value="ECO:0007669"/>
    <property type="project" value="UniProtKB-SubCell"/>
</dbReference>
<dbReference type="GO" id="GO:0005524">
    <property type="term" value="F:ATP binding"/>
    <property type="evidence" value="ECO:0007669"/>
    <property type="project" value="UniProtKB-UniRule"/>
</dbReference>
<dbReference type="GO" id="GO:0046872">
    <property type="term" value="F:metal ion binding"/>
    <property type="evidence" value="ECO:0007669"/>
    <property type="project" value="UniProtKB-KW"/>
</dbReference>
<dbReference type="GO" id="GO:0004825">
    <property type="term" value="F:methionine-tRNA ligase activity"/>
    <property type="evidence" value="ECO:0007669"/>
    <property type="project" value="UniProtKB-UniRule"/>
</dbReference>
<dbReference type="GO" id="GO:0000049">
    <property type="term" value="F:tRNA binding"/>
    <property type="evidence" value="ECO:0007669"/>
    <property type="project" value="UniProtKB-KW"/>
</dbReference>
<dbReference type="GO" id="GO:0006431">
    <property type="term" value="P:methionyl-tRNA aminoacylation"/>
    <property type="evidence" value="ECO:0007669"/>
    <property type="project" value="UniProtKB-UniRule"/>
</dbReference>
<dbReference type="CDD" id="cd07957">
    <property type="entry name" value="Anticodon_Ia_Met"/>
    <property type="match status" value="1"/>
</dbReference>
<dbReference type="CDD" id="cd00814">
    <property type="entry name" value="MetRS_core"/>
    <property type="match status" value="1"/>
</dbReference>
<dbReference type="CDD" id="cd02800">
    <property type="entry name" value="tRNA_bind_EcMetRS_like"/>
    <property type="match status" value="1"/>
</dbReference>
<dbReference type="FunFam" id="1.10.730.10:FF:000026">
    <property type="entry name" value="Methionine--tRNA ligase"/>
    <property type="match status" value="1"/>
</dbReference>
<dbReference type="FunFam" id="2.170.220.10:FF:000002">
    <property type="entry name" value="Methionine--tRNA ligase"/>
    <property type="match status" value="1"/>
</dbReference>
<dbReference type="FunFam" id="2.40.50.140:FF:000042">
    <property type="entry name" value="Methionine--tRNA ligase"/>
    <property type="match status" value="1"/>
</dbReference>
<dbReference type="Gene3D" id="2.170.220.10">
    <property type="match status" value="1"/>
</dbReference>
<dbReference type="Gene3D" id="3.40.50.620">
    <property type="entry name" value="HUPs"/>
    <property type="match status" value="1"/>
</dbReference>
<dbReference type="Gene3D" id="1.10.730.10">
    <property type="entry name" value="Isoleucyl-tRNA Synthetase, Domain 1"/>
    <property type="match status" value="1"/>
</dbReference>
<dbReference type="Gene3D" id="2.40.50.140">
    <property type="entry name" value="Nucleic acid-binding proteins"/>
    <property type="match status" value="1"/>
</dbReference>
<dbReference type="HAMAP" id="MF_01228">
    <property type="entry name" value="Met_tRNA_synth_type2"/>
    <property type="match status" value="1"/>
</dbReference>
<dbReference type="InterPro" id="IPR001412">
    <property type="entry name" value="aa-tRNA-synth_I_CS"/>
</dbReference>
<dbReference type="InterPro" id="IPR041872">
    <property type="entry name" value="Anticodon_Met"/>
</dbReference>
<dbReference type="InterPro" id="IPR004495">
    <property type="entry name" value="Met-tRNA-synth_bsu_C"/>
</dbReference>
<dbReference type="InterPro" id="IPR014758">
    <property type="entry name" value="Met-tRNA_synth"/>
</dbReference>
<dbReference type="InterPro" id="IPR023457">
    <property type="entry name" value="Met-tRNA_synth_2"/>
</dbReference>
<dbReference type="InterPro" id="IPR015413">
    <property type="entry name" value="Methionyl/Leucyl_tRNA_Synth"/>
</dbReference>
<dbReference type="InterPro" id="IPR033911">
    <property type="entry name" value="MetRS_core"/>
</dbReference>
<dbReference type="InterPro" id="IPR012340">
    <property type="entry name" value="NA-bd_OB-fold"/>
</dbReference>
<dbReference type="InterPro" id="IPR014729">
    <property type="entry name" value="Rossmann-like_a/b/a_fold"/>
</dbReference>
<dbReference type="InterPro" id="IPR002547">
    <property type="entry name" value="tRNA-bd_dom"/>
</dbReference>
<dbReference type="InterPro" id="IPR009080">
    <property type="entry name" value="tRNAsynth_Ia_anticodon-bd"/>
</dbReference>
<dbReference type="NCBIfam" id="TIGR00398">
    <property type="entry name" value="metG"/>
    <property type="match status" value="1"/>
</dbReference>
<dbReference type="NCBIfam" id="TIGR00399">
    <property type="entry name" value="metG_C_term"/>
    <property type="match status" value="1"/>
</dbReference>
<dbReference type="NCBIfam" id="NF008900">
    <property type="entry name" value="PRK12267.1"/>
    <property type="match status" value="1"/>
</dbReference>
<dbReference type="PANTHER" id="PTHR43326:SF1">
    <property type="entry name" value="METHIONINE--TRNA LIGASE, MITOCHONDRIAL"/>
    <property type="match status" value="1"/>
</dbReference>
<dbReference type="PANTHER" id="PTHR43326">
    <property type="entry name" value="METHIONYL-TRNA SYNTHETASE"/>
    <property type="match status" value="1"/>
</dbReference>
<dbReference type="Pfam" id="PF19303">
    <property type="entry name" value="Anticodon_3"/>
    <property type="match status" value="1"/>
</dbReference>
<dbReference type="Pfam" id="PF09334">
    <property type="entry name" value="tRNA-synt_1g"/>
    <property type="match status" value="2"/>
</dbReference>
<dbReference type="Pfam" id="PF01588">
    <property type="entry name" value="tRNA_bind"/>
    <property type="match status" value="1"/>
</dbReference>
<dbReference type="PRINTS" id="PR01041">
    <property type="entry name" value="TRNASYNTHMET"/>
</dbReference>
<dbReference type="SUPFAM" id="SSF47323">
    <property type="entry name" value="Anticodon-binding domain of a subclass of class I aminoacyl-tRNA synthetases"/>
    <property type="match status" value="1"/>
</dbReference>
<dbReference type="SUPFAM" id="SSF50249">
    <property type="entry name" value="Nucleic acid-binding proteins"/>
    <property type="match status" value="1"/>
</dbReference>
<dbReference type="SUPFAM" id="SSF52374">
    <property type="entry name" value="Nucleotidylyl transferase"/>
    <property type="match status" value="1"/>
</dbReference>
<dbReference type="PROSITE" id="PS00178">
    <property type="entry name" value="AA_TRNA_LIGASE_I"/>
    <property type="match status" value="1"/>
</dbReference>
<dbReference type="PROSITE" id="PS50886">
    <property type="entry name" value="TRBD"/>
    <property type="match status" value="1"/>
</dbReference>
<feature type="chain" id="PRO_0000139210" description="Methionine--tRNA ligase">
    <location>
        <begin position="1"/>
        <end position="649"/>
    </location>
</feature>
<feature type="domain" description="tRNA-binding">
    <location>
        <begin position="555"/>
        <end position="647"/>
    </location>
</feature>
<feature type="short sequence motif" description="'HIGH' region">
    <location>
        <begin position="13"/>
        <end position="23"/>
    </location>
</feature>
<feature type="short sequence motif" description="'KMSKS' region">
    <location>
        <begin position="298"/>
        <end position="302"/>
    </location>
</feature>
<feature type="binding site" evidence="1">
    <location>
        <position position="128"/>
    </location>
    <ligand>
        <name>Zn(2+)</name>
        <dbReference type="ChEBI" id="CHEBI:29105"/>
    </ligand>
</feature>
<feature type="binding site" evidence="1">
    <location>
        <position position="131"/>
    </location>
    <ligand>
        <name>Zn(2+)</name>
        <dbReference type="ChEBI" id="CHEBI:29105"/>
    </ligand>
</feature>
<feature type="binding site" evidence="1">
    <location>
        <position position="145"/>
    </location>
    <ligand>
        <name>Zn(2+)</name>
        <dbReference type="ChEBI" id="CHEBI:29105"/>
    </ligand>
</feature>
<feature type="binding site" evidence="1">
    <location>
        <position position="148"/>
    </location>
    <ligand>
        <name>Zn(2+)</name>
        <dbReference type="ChEBI" id="CHEBI:29105"/>
    </ligand>
</feature>
<feature type="binding site" evidence="1">
    <location>
        <position position="301"/>
    </location>
    <ligand>
        <name>ATP</name>
        <dbReference type="ChEBI" id="CHEBI:30616"/>
    </ligand>
</feature>
<reference key="1">
    <citation type="journal article" date="1991" name="Nucleic Acids Res.">
        <title>Methionyl-tRNA synthetase from Bacillus stearothermophilus: structural and functional identities with the Escherichia coli enzyme.</title>
        <authorList>
            <person name="Mechulam Y."/>
            <person name="Schmitt E."/>
            <person name="Panvert M."/>
            <person name="Schmitter J.-M."/>
            <person name="Lapadat-Tapolsky M."/>
            <person name="Meinnel T."/>
            <person name="Dessen P."/>
            <person name="Blanquet S."/>
            <person name="Fayat G."/>
        </authorList>
    </citation>
    <scope>NUCLEOTIDE SEQUENCE [GENOMIC DNA]</scope>
    <source>
        <strain>ATCC 1518</strain>
    </source>
</reference>
<evidence type="ECO:0000250" key="1"/>
<evidence type="ECO:0000305" key="2"/>
<organism>
    <name type="scientific">Geobacillus stearothermophilus</name>
    <name type="common">Bacillus stearothermophilus</name>
    <dbReference type="NCBI Taxonomy" id="1422"/>
    <lineage>
        <taxon>Bacteria</taxon>
        <taxon>Bacillati</taxon>
        <taxon>Bacillota</taxon>
        <taxon>Bacilli</taxon>
        <taxon>Bacillales</taxon>
        <taxon>Anoxybacillaceae</taxon>
        <taxon>Geobacillus</taxon>
    </lineage>
</organism>
<keyword id="KW-0030">Aminoacyl-tRNA synthetase</keyword>
<keyword id="KW-0067">ATP-binding</keyword>
<keyword id="KW-0963">Cytoplasm</keyword>
<keyword id="KW-0436">Ligase</keyword>
<keyword id="KW-0479">Metal-binding</keyword>
<keyword id="KW-0547">Nucleotide-binding</keyword>
<keyword id="KW-0648">Protein biosynthesis</keyword>
<keyword id="KW-0694">RNA-binding</keyword>
<keyword id="KW-0820">tRNA-binding</keyword>
<keyword id="KW-0862">Zinc</keyword>
<comment type="function">
    <text evidence="1">Is required not only for elongation of protein synthesis but also for the initiation of all mRNA translation through initiator tRNA(fMet) aminoacylation.</text>
</comment>
<comment type="catalytic activity">
    <reaction>
        <text>tRNA(Met) + L-methionine + ATP = L-methionyl-tRNA(Met) + AMP + diphosphate</text>
        <dbReference type="Rhea" id="RHEA:13481"/>
        <dbReference type="Rhea" id="RHEA-COMP:9667"/>
        <dbReference type="Rhea" id="RHEA-COMP:9698"/>
        <dbReference type="ChEBI" id="CHEBI:30616"/>
        <dbReference type="ChEBI" id="CHEBI:33019"/>
        <dbReference type="ChEBI" id="CHEBI:57844"/>
        <dbReference type="ChEBI" id="CHEBI:78442"/>
        <dbReference type="ChEBI" id="CHEBI:78530"/>
        <dbReference type="ChEBI" id="CHEBI:456215"/>
        <dbReference type="EC" id="6.1.1.10"/>
    </reaction>
</comment>
<comment type="cofactor">
    <cofactor>
        <name>Zn(2+)</name>
        <dbReference type="ChEBI" id="CHEBI:29105"/>
    </cofactor>
    <text>Binds 1 zinc ion per subunit.</text>
</comment>
<comment type="subunit">
    <text>Homodimer.</text>
</comment>
<comment type="subcellular location">
    <subcellularLocation>
        <location evidence="1">Cytoplasm</location>
    </subcellularLocation>
</comment>
<comment type="similarity">
    <text evidence="2">Belongs to the class-I aminoacyl-tRNA synthetase family. MetG type 2A subfamily.</text>
</comment>
<protein>
    <recommendedName>
        <fullName>Methionine--tRNA ligase</fullName>
        <ecNumber>6.1.1.10</ecNumber>
    </recommendedName>
    <alternativeName>
        <fullName>Methionyl-tRNA synthetase</fullName>
        <shortName>MetRS</shortName>
    </alternativeName>
</protein>
<proteinExistence type="inferred from homology"/>
<gene>
    <name type="primary">metG</name>
    <name type="synonym">metS</name>
</gene>
<name>SYM_GEOSE</name>